<dbReference type="EC" id="2.8.1.6" evidence="1"/>
<dbReference type="EMBL" id="CP000828">
    <property type="protein sequence ID" value="ABW26754.1"/>
    <property type="molecule type" value="Genomic_DNA"/>
</dbReference>
<dbReference type="SMR" id="B0CC69"/>
<dbReference type="STRING" id="329726.AM1_1733"/>
<dbReference type="KEGG" id="amr:AM1_1733"/>
<dbReference type="eggNOG" id="COG0502">
    <property type="taxonomic scope" value="Bacteria"/>
</dbReference>
<dbReference type="HOGENOM" id="CLU_033172_2_1_3"/>
<dbReference type="OrthoDB" id="9786826at2"/>
<dbReference type="UniPathway" id="UPA00078">
    <property type="reaction ID" value="UER00162"/>
</dbReference>
<dbReference type="Proteomes" id="UP000000268">
    <property type="component" value="Chromosome"/>
</dbReference>
<dbReference type="GO" id="GO:0051537">
    <property type="term" value="F:2 iron, 2 sulfur cluster binding"/>
    <property type="evidence" value="ECO:0007669"/>
    <property type="project" value="UniProtKB-KW"/>
</dbReference>
<dbReference type="GO" id="GO:0051539">
    <property type="term" value="F:4 iron, 4 sulfur cluster binding"/>
    <property type="evidence" value="ECO:0007669"/>
    <property type="project" value="UniProtKB-KW"/>
</dbReference>
<dbReference type="GO" id="GO:0004076">
    <property type="term" value="F:biotin synthase activity"/>
    <property type="evidence" value="ECO:0007669"/>
    <property type="project" value="UniProtKB-UniRule"/>
</dbReference>
<dbReference type="GO" id="GO:0005506">
    <property type="term" value="F:iron ion binding"/>
    <property type="evidence" value="ECO:0007669"/>
    <property type="project" value="UniProtKB-UniRule"/>
</dbReference>
<dbReference type="GO" id="GO:0009102">
    <property type="term" value="P:biotin biosynthetic process"/>
    <property type="evidence" value="ECO:0007669"/>
    <property type="project" value="UniProtKB-UniRule"/>
</dbReference>
<dbReference type="CDD" id="cd01335">
    <property type="entry name" value="Radical_SAM"/>
    <property type="match status" value="1"/>
</dbReference>
<dbReference type="FunFam" id="3.20.20.70:FF:000026">
    <property type="entry name" value="Biotin synthase"/>
    <property type="match status" value="1"/>
</dbReference>
<dbReference type="Gene3D" id="3.20.20.70">
    <property type="entry name" value="Aldolase class I"/>
    <property type="match status" value="1"/>
</dbReference>
<dbReference type="HAMAP" id="MF_01694">
    <property type="entry name" value="BioB"/>
    <property type="match status" value="1"/>
</dbReference>
<dbReference type="InterPro" id="IPR013785">
    <property type="entry name" value="Aldolase_TIM"/>
</dbReference>
<dbReference type="InterPro" id="IPR010722">
    <property type="entry name" value="BATS_dom"/>
</dbReference>
<dbReference type="InterPro" id="IPR002684">
    <property type="entry name" value="Biotin_synth/BioAB"/>
</dbReference>
<dbReference type="InterPro" id="IPR024177">
    <property type="entry name" value="Biotin_synthase"/>
</dbReference>
<dbReference type="InterPro" id="IPR006638">
    <property type="entry name" value="Elp3/MiaA/NifB-like_rSAM"/>
</dbReference>
<dbReference type="InterPro" id="IPR007197">
    <property type="entry name" value="rSAM"/>
</dbReference>
<dbReference type="NCBIfam" id="TIGR00433">
    <property type="entry name" value="bioB"/>
    <property type="match status" value="1"/>
</dbReference>
<dbReference type="PANTHER" id="PTHR22976">
    <property type="entry name" value="BIOTIN SYNTHASE"/>
    <property type="match status" value="1"/>
</dbReference>
<dbReference type="PANTHER" id="PTHR22976:SF2">
    <property type="entry name" value="BIOTIN SYNTHASE, MITOCHONDRIAL"/>
    <property type="match status" value="1"/>
</dbReference>
<dbReference type="Pfam" id="PF06968">
    <property type="entry name" value="BATS"/>
    <property type="match status" value="1"/>
</dbReference>
<dbReference type="Pfam" id="PF04055">
    <property type="entry name" value="Radical_SAM"/>
    <property type="match status" value="1"/>
</dbReference>
<dbReference type="PIRSF" id="PIRSF001619">
    <property type="entry name" value="Biotin_synth"/>
    <property type="match status" value="1"/>
</dbReference>
<dbReference type="SFLD" id="SFLDG01278">
    <property type="entry name" value="biotin_synthase_like"/>
    <property type="match status" value="1"/>
</dbReference>
<dbReference type="SFLD" id="SFLDS00029">
    <property type="entry name" value="Radical_SAM"/>
    <property type="match status" value="1"/>
</dbReference>
<dbReference type="SMART" id="SM00876">
    <property type="entry name" value="BATS"/>
    <property type="match status" value="1"/>
</dbReference>
<dbReference type="SMART" id="SM00729">
    <property type="entry name" value="Elp3"/>
    <property type="match status" value="1"/>
</dbReference>
<dbReference type="SUPFAM" id="SSF102114">
    <property type="entry name" value="Radical SAM enzymes"/>
    <property type="match status" value="1"/>
</dbReference>
<dbReference type="PROSITE" id="PS51918">
    <property type="entry name" value="RADICAL_SAM"/>
    <property type="match status" value="1"/>
</dbReference>
<proteinExistence type="inferred from homology"/>
<organism>
    <name type="scientific">Acaryochloris marina (strain MBIC 11017)</name>
    <dbReference type="NCBI Taxonomy" id="329726"/>
    <lineage>
        <taxon>Bacteria</taxon>
        <taxon>Bacillati</taxon>
        <taxon>Cyanobacteriota</taxon>
        <taxon>Cyanophyceae</taxon>
        <taxon>Acaryochloridales</taxon>
        <taxon>Acaryochloridaceae</taxon>
        <taxon>Acaryochloris</taxon>
    </lineage>
</organism>
<keyword id="KW-0001">2Fe-2S</keyword>
<keyword id="KW-0004">4Fe-4S</keyword>
<keyword id="KW-0093">Biotin biosynthesis</keyword>
<keyword id="KW-0408">Iron</keyword>
<keyword id="KW-0411">Iron-sulfur</keyword>
<keyword id="KW-0479">Metal-binding</keyword>
<keyword id="KW-1185">Reference proteome</keyword>
<keyword id="KW-0949">S-adenosyl-L-methionine</keyword>
<keyword id="KW-0808">Transferase</keyword>
<accession>B0CC69</accession>
<evidence type="ECO:0000255" key="1">
    <source>
        <dbReference type="HAMAP-Rule" id="MF_01694"/>
    </source>
</evidence>
<evidence type="ECO:0000255" key="2">
    <source>
        <dbReference type="PROSITE-ProRule" id="PRU01266"/>
    </source>
</evidence>
<reference key="1">
    <citation type="journal article" date="2008" name="Proc. Natl. Acad. Sci. U.S.A.">
        <title>Niche adaptation and genome expansion in the chlorophyll d-producing cyanobacterium Acaryochloris marina.</title>
        <authorList>
            <person name="Swingley W.D."/>
            <person name="Chen M."/>
            <person name="Cheung P.C."/>
            <person name="Conrad A.L."/>
            <person name="Dejesa L.C."/>
            <person name="Hao J."/>
            <person name="Honchak B.M."/>
            <person name="Karbach L.E."/>
            <person name="Kurdoglu A."/>
            <person name="Lahiri S."/>
            <person name="Mastrian S.D."/>
            <person name="Miyashita H."/>
            <person name="Page L."/>
            <person name="Ramakrishna P."/>
            <person name="Satoh S."/>
            <person name="Sattley W.M."/>
            <person name="Shimada Y."/>
            <person name="Taylor H.L."/>
            <person name="Tomo T."/>
            <person name="Tsuchiya T."/>
            <person name="Wang Z.T."/>
            <person name="Raymond J."/>
            <person name="Mimuro M."/>
            <person name="Blankenship R.E."/>
            <person name="Touchman J.W."/>
        </authorList>
    </citation>
    <scope>NUCLEOTIDE SEQUENCE [LARGE SCALE GENOMIC DNA]</scope>
    <source>
        <strain>MBIC 11017</strain>
    </source>
</reference>
<comment type="function">
    <text evidence="1">Catalyzes the conversion of dethiobiotin (DTB) to biotin by the insertion of a sulfur atom into dethiobiotin via a radical-based mechanism.</text>
</comment>
<comment type="catalytic activity">
    <reaction evidence="1">
        <text>(4R,5S)-dethiobiotin + (sulfur carrier)-SH + 2 reduced [2Fe-2S]-[ferredoxin] + 2 S-adenosyl-L-methionine = (sulfur carrier)-H + biotin + 2 5'-deoxyadenosine + 2 L-methionine + 2 oxidized [2Fe-2S]-[ferredoxin]</text>
        <dbReference type="Rhea" id="RHEA:22060"/>
        <dbReference type="Rhea" id="RHEA-COMP:10000"/>
        <dbReference type="Rhea" id="RHEA-COMP:10001"/>
        <dbReference type="Rhea" id="RHEA-COMP:14737"/>
        <dbReference type="Rhea" id="RHEA-COMP:14739"/>
        <dbReference type="ChEBI" id="CHEBI:17319"/>
        <dbReference type="ChEBI" id="CHEBI:29917"/>
        <dbReference type="ChEBI" id="CHEBI:33737"/>
        <dbReference type="ChEBI" id="CHEBI:33738"/>
        <dbReference type="ChEBI" id="CHEBI:57586"/>
        <dbReference type="ChEBI" id="CHEBI:57844"/>
        <dbReference type="ChEBI" id="CHEBI:59789"/>
        <dbReference type="ChEBI" id="CHEBI:64428"/>
        <dbReference type="ChEBI" id="CHEBI:149473"/>
        <dbReference type="EC" id="2.8.1.6"/>
    </reaction>
</comment>
<comment type="cofactor">
    <cofactor evidence="1">
        <name>[4Fe-4S] cluster</name>
        <dbReference type="ChEBI" id="CHEBI:49883"/>
    </cofactor>
    <text evidence="1">Binds 1 [4Fe-4S] cluster. The cluster is coordinated with 3 cysteines and an exchangeable S-adenosyl-L-methionine.</text>
</comment>
<comment type="cofactor">
    <cofactor evidence="1">
        <name>[2Fe-2S] cluster</name>
        <dbReference type="ChEBI" id="CHEBI:190135"/>
    </cofactor>
    <text evidence="1">Binds 1 [2Fe-2S] cluster. The cluster is coordinated with 3 cysteines and 1 arginine.</text>
</comment>
<comment type="pathway">
    <text evidence="1">Cofactor biosynthesis; biotin biosynthesis; biotin from 7,8-diaminononanoate: step 2/2.</text>
</comment>
<comment type="subunit">
    <text evidence="1">Homodimer.</text>
</comment>
<comment type="similarity">
    <text evidence="1">Belongs to the radical SAM superfamily. Biotin synthase family.</text>
</comment>
<feature type="chain" id="PRO_0000381165" description="Biotin synthase">
    <location>
        <begin position="1"/>
        <end position="346"/>
    </location>
</feature>
<feature type="domain" description="Radical SAM core" evidence="2">
    <location>
        <begin position="36"/>
        <end position="265"/>
    </location>
</feature>
<feature type="binding site" evidence="1">
    <location>
        <position position="54"/>
    </location>
    <ligand>
        <name>[4Fe-4S] cluster</name>
        <dbReference type="ChEBI" id="CHEBI:49883"/>
        <note>4Fe-4S-S-AdoMet</note>
    </ligand>
</feature>
<feature type="binding site" evidence="1">
    <location>
        <position position="58"/>
    </location>
    <ligand>
        <name>[4Fe-4S] cluster</name>
        <dbReference type="ChEBI" id="CHEBI:49883"/>
        <note>4Fe-4S-S-AdoMet</note>
    </ligand>
</feature>
<feature type="binding site" evidence="1">
    <location>
        <position position="61"/>
    </location>
    <ligand>
        <name>[4Fe-4S] cluster</name>
        <dbReference type="ChEBI" id="CHEBI:49883"/>
        <note>4Fe-4S-S-AdoMet</note>
    </ligand>
</feature>
<feature type="binding site" evidence="1">
    <location>
        <position position="98"/>
    </location>
    <ligand>
        <name>[2Fe-2S] cluster</name>
        <dbReference type="ChEBI" id="CHEBI:190135"/>
    </ligand>
</feature>
<feature type="binding site" evidence="1">
    <location>
        <position position="130"/>
    </location>
    <ligand>
        <name>[2Fe-2S] cluster</name>
        <dbReference type="ChEBI" id="CHEBI:190135"/>
    </ligand>
</feature>
<feature type="binding site" evidence="1">
    <location>
        <position position="190"/>
    </location>
    <ligand>
        <name>[2Fe-2S] cluster</name>
        <dbReference type="ChEBI" id="CHEBI:190135"/>
    </ligand>
</feature>
<feature type="binding site" evidence="1">
    <location>
        <position position="260"/>
    </location>
    <ligand>
        <name>[2Fe-2S] cluster</name>
        <dbReference type="ChEBI" id="CHEBI:190135"/>
    </ligand>
</feature>
<sequence>MSEETFPQASALTLLSDPNIDLLSLVAAAGEVRMTYFGRQVMLHRINDIQNGLCPEDCGYCAQSKISDAPIKKYPLKSEEDIIQEAYEAKAKGVYRYCMVSSGRGPTAERTEHLAHIIRRIKNEVGIQTCLSAGLMDHEQAAVLKEAGLDRLNHNLNTSESHTPDIVTTHTFQDRINTLKAARSAGLDLCSGMIAGMGETDQDIVDIAYQLHEYQVPSIPINFLIPISGNPIYDCNQLTPQRCLRILCLFRFVNPKAEIRIGGGREGHLRSLQALALYPANSLFVEGYLATRGHSVDQVYQLIHDAGFEVAGETSLTGDLSATSQFQLDDNPNILNPQTTISFSNS</sequence>
<gene>
    <name evidence="1" type="primary">bioB</name>
    <name type="ordered locus">AM1_1733</name>
</gene>
<protein>
    <recommendedName>
        <fullName evidence="1">Biotin synthase</fullName>
        <ecNumber evidence="1">2.8.1.6</ecNumber>
    </recommendedName>
</protein>
<name>BIOB_ACAM1</name>